<accession>A6SDA8</accession>
<accession>A0A384K7P1</accession>
<gene>
    <name type="primary">cdc123</name>
    <name type="ORF">BC1G_10891</name>
    <name type="ORF">BCIN_16g03880</name>
</gene>
<proteinExistence type="inferred from homology"/>
<dbReference type="EMBL" id="CP009820">
    <property type="protein sequence ID" value="ATZ58674.1"/>
    <property type="molecule type" value="Genomic_DNA"/>
</dbReference>
<dbReference type="SMR" id="A6SDA8"/>
<dbReference type="EnsemblFungi" id="Bcin16g03880.1">
    <property type="protein sequence ID" value="Bcin16p03880.1"/>
    <property type="gene ID" value="Bcin16g03880"/>
</dbReference>
<dbReference type="GeneID" id="5431210"/>
<dbReference type="VEuPathDB" id="FungiDB:Bcin16g03880"/>
<dbReference type="OMA" id="TFPDPNF"/>
<dbReference type="OrthoDB" id="360540at2759"/>
<dbReference type="Proteomes" id="UP000001798">
    <property type="component" value="Chromosome bcin16"/>
</dbReference>
<dbReference type="GO" id="GO:0005737">
    <property type="term" value="C:cytoplasm"/>
    <property type="evidence" value="ECO:0000250"/>
    <property type="project" value="UniProtKB"/>
</dbReference>
<dbReference type="GO" id="GO:0005524">
    <property type="term" value="F:ATP binding"/>
    <property type="evidence" value="ECO:0000250"/>
    <property type="project" value="UniProtKB"/>
</dbReference>
<dbReference type="GO" id="GO:0000287">
    <property type="term" value="F:magnesium ion binding"/>
    <property type="evidence" value="ECO:0000250"/>
    <property type="project" value="UniProtKB"/>
</dbReference>
<dbReference type="GO" id="GO:0044183">
    <property type="term" value="F:protein folding chaperone"/>
    <property type="evidence" value="ECO:0000250"/>
    <property type="project" value="UniProtKB"/>
</dbReference>
<dbReference type="GO" id="GO:1905143">
    <property type="term" value="P:eukaryotic translation initiation factor 2 complex assembly"/>
    <property type="evidence" value="ECO:0000250"/>
    <property type="project" value="UniProtKB"/>
</dbReference>
<dbReference type="InterPro" id="IPR009772">
    <property type="entry name" value="CDC123"/>
</dbReference>
<dbReference type="PANTHER" id="PTHR15323:SF6">
    <property type="entry name" value="CELL DIVISION CYCLE PROTEIN 123 HOMOLOG"/>
    <property type="match status" value="1"/>
</dbReference>
<dbReference type="PANTHER" id="PTHR15323">
    <property type="entry name" value="D123 PROTEIN"/>
    <property type="match status" value="1"/>
</dbReference>
<dbReference type="Pfam" id="PF07065">
    <property type="entry name" value="D123"/>
    <property type="match status" value="1"/>
</dbReference>
<protein>
    <recommendedName>
        <fullName evidence="5">Translation initiation factor eIF2 assembly protein</fullName>
    </recommendedName>
    <alternativeName>
        <fullName>Cell division cycle protein 123</fullName>
    </alternativeName>
</protein>
<evidence type="ECO:0000250" key="1">
    <source>
        <dbReference type="UniProtKB" id="O75794"/>
    </source>
</evidence>
<evidence type="ECO:0000250" key="2">
    <source>
        <dbReference type="UniProtKB" id="Q05791"/>
    </source>
</evidence>
<evidence type="ECO:0000250" key="3">
    <source>
        <dbReference type="UniProtKB" id="Q9P7N5"/>
    </source>
</evidence>
<evidence type="ECO:0000256" key="4">
    <source>
        <dbReference type="SAM" id="MobiDB-lite"/>
    </source>
</evidence>
<evidence type="ECO:0000305" key="5"/>
<organism>
    <name type="scientific">Botryotinia fuckeliana (strain B05.10)</name>
    <name type="common">Noble rot fungus</name>
    <name type="synonym">Botrytis cinerea</name>
    <dbReference type="NCBI Taxonomy" id="332648"/>
    <lineage>
        <taxon>Eukaryota</taxon>
        <taxon>Fungi</taxon>
        <taxon>Dikarya</taxon>
        <taxon>Ascomycota</taxon>
        <taxon>Pezizomycotina</taxon>
        <taxon>Leotiomycetes</taxon>
        <taxon>Helotiales</taxon>
        <taxon>Sclerotiniaceae</taxon>
        <taxon>Botrytis</taxon>
    </lineage>
</organism>
<name>CD123_BOTFB</name>
<feature type="chain" id="PRO_0000350940" description="Translation initiation factor eIF2 assembly protein">
    <location>
        <begin position="1"/>
        <end position="406"/>
    </location>
</feature>
<feature type="region of interest" description="Disordered" evidence="4">
    <location>
        <begin position="78"/>
        <end position="102"/>
    </location>
</feature>
<feature type="region of interest" description="Disordered" evidence="4">
    <location>
        <begin position="303"/>
        <end position="323"/>
    </location>
</feature>
<feature type="region of interest" description="Disordered" evidence="4">
    <location>
        <begin position="387"/>
        <end position="406"/>
    </location>
</feature>
<feature type="compositionally biased region" description="Acidic residues" evidence="4">
    <location>
        <begin position="393"/>
        <end position="406"/>
    </location>
</feature>
<feature type="binding site" evidence="1">
    <location>
        <position position="126"/>
    </location>
    <ligand>
        <name>ATP</name>
        <dbReference type="ChEBI" id="CHEBI:30616"/>
    </ligand>
</feature>
<feature type="binding site" evidence="1">
    <location>
        <position position="129"/>
    </location>
    <ligand>
        <name>ATP</name>
        <dbReference type="ChEBI" id="CHEBI:30616"/>
    </ligand>
</feature>
<feature type="binding site" evidence="1">
    <location>
        <position position="131"/>
    </location>
    <ligand>
        <name>ATP</name>
        <dbReference type="ChEBI" id="CHEBI:30616"/>
    </ligand>
</feature>
<feature type="binding site" evidence="3">
    <location>
        <position position="133"/>
    </location>
    <ligand>
        <name>ATP</name>
        <dbReference type="ChEBI" id="CHEBI:30616"/>
    </ligand>
</feature>
<feature type="binding site" evidence="3">
    <location>
        <position position="192"/>
    </location>
    <ligand>
        <name>ATP</name>
        <dbReference type="ChEBI" id="CHEBI:30616"/>
    </ligand>
</feature>
<feature type="binding site" evidence="1">
    <location>
        <position position="193"/>
    </location>
    <ligand>
        <name>ATP</name>
        <dbReference type="ChEBI" id="CHEBI:30616"/>
    </ligand>
</feature>
<feature type="binding site" evidence="3">
    <location>
        <position position="194"/>
    </location>
    <ligand>
        <name>ATP</name>
        <dbReference type="ChEBI" id="CHEBI:30616"/>
    </ligand>
</feature>
<feature type="binding site" evidence="3">
    <location>
        <position position="195"/>
    </location>
    <ligand>
        <name>ATP</name>
        <dbReference type="ChEBI" id="CHEBI:30616"/>
    </ligand>
</feature>
<feature type="binding site" evidence="1">
    <location>
        <position position="202"/>
    </location>
    <ligand>
        <name>ATP</name>
        <dbReference type="ChEBI" id="CHEBI:30616"/>
    </ligand>
</feature>
<feature type="binding site" evidence="1">
    <location>
        <position position="204"/>
    </location>
    <ligand>
        <name>ATP</name>
        <dbReference type="ChEBI" id="CHEBI:30616"/>
    </ligand>
</feature>
<feature type="binding site" evidence="1">
    <location>
        <position position="218"/>
    </location>
    <ligand>
        <name>ATP</name>
        <dbReference type="ChEBI" id="CHEBI:30616"/>
    </ligand>
</feature>
<feature type="binding site" evidence="3">
    <location>
        <position position="257"/>
    </location>
    <ligand>
        <name>ATP</name>
        <dbReference type="ChEBI" id="CHEBI:30616"/>
    </ligand>
</feature>
<feature type="binding site" evidence="1">
    <location>
        <position position="271"/>
    </location>
    <ligand>
        <name>ATP</name>
        <dbReference type="ChEBI" id="CHEBI:30616"/>
    </ligand>
</feature>
<feature type="binding site" evidence="1">
    <location>
        <position position="271"/>
    </location>
    <ligand>
        <name>Mg(2+)</name>
        <dbReference type="ChEBI" id="CHEBI:18420"/>
    </ligand>
</feature>
<feature type="binding site" evidence="1">
    <location>
        <position position="273"/>
    </location>
    <ligand>
        <name>ATP</name>
        <dbReference type="ChEBI" id="CHEBI:30616"/>
    </ligand>
</feature>
<feature type="binding site" evidence="1">
    <location>
        <position position="273"/>
    </location>
    <ligand>
        <name>Mg(2+)</name>
        <dbReference type="ChEBI" id="CHEBI:18420"/>
    </ligand>
</feature>
<keyword id="KW-0067">ATP-binding</keyword>
<keyword id="KW-0143">Chaperone</keyword>
<keyword id="KW-0963">Cytoplasm</keyword>
<keyword id="KW-0460">Magnesium</keyword>
<keyword id="KW-0479">Metal-binding</keyword>
<keyword id="KW-0547">Nucleotide-binding</keyword>
<keyword id="KW-1185">Reference proteome</keyword>
<sequence>MPALNNSEAGTAEAEPLTRLPFEPITKSHILNCSYDNWHAKYRSSTLKSRIIPLTSEFLSYLREDGIVLPSEIATFPPPETYNNNSTSDGWDEDTDTGPDPSEKFSEIHKQIQETIAELDGSVVPKLNWSAPKDATWISLKQNSMECNTPNDIYLLLKSSDFITHDLEHAFDGCAEDPSITKESTQYVLVLRKWFKVNPSCEFRCFVRDRRIIGICQRDLNYFEFLFPLIPTLREVIQEYFDKTLKDTFPDRNFSFDVYLPDPFDKVRLVDINPWAPRTDPLLFSWLELLTLSVPSPLLGVADSSSVPPLPAQSSDEDEGTDDVEELGWMPEFRLIKKDDPEAYSFSSPQYSAHKMPQEVVEAGASGEGGMREFADNWQRMLNGELEMMGAGEDSDDDDDDDKTTR</sequence>
<comment type="function">
    <text evidence="2">ATP-dependent protein-folding chaperone for the eIF2 complex. Binds to the gamma subunit of the eIF2 complex which allows the subunit to assemble with the alpha and beta subunits.</text>
</comment>
<comment type="subcellular location">
    <subcellularLocation>
        <location evidence="2">Cytoplasm</location>
    </subcellularLocation>
</comment>
<comment type="similarity">
    <text evidence="5">Belongs to the CDC123 family.</text>
</comment>
<reference key="1">
    <citation type="journal article" date="2011" name="PLoS Genet.">
        <title>Genomic analysis of the necrotrophic fungal pathogens Sclerotinia sclerotiorum and Botrytis cinerea.</title>
        <authorList>
            <person name="Amselem J."/>
            <person name="Cuomo C.A."/>
            <person name="van Kan J.A.L."/>
            <person name="Viaud M."/>
            <person name="Benito E.P."/>
            <person name="Couloux A."/>
            <person name="Coutinho P.M."/>
            <person name="de Vries R.P."/>
            <person name="Dyer P.S."/>
            <person name="Fillinger S."/>
            <person name="Fournier E."/>
            <person name="Gout L."/>
            <person name="Hahn M."/>
            <person name="Kohn L."/>
            <person name="Lapalu N."/>
            <person name="Plummer K.M."/>
            <person name="Pradier J.-M."/>
            <person name="Quevillon E."/>
            <person name="Sharon A."/>
            <person name="Simon A."/>
            <person name="ten Have A."/>
            <person name="Tudzynski B."/>
            <person name="Tudzynski P."/>
            <person name="Wincker P."/>
            <person name="Andrew M."/>
            <person name="Anthouard V."/>
            <person name="Beever R.E."/>
            <person name="Beffa R."/>
            <person name="Benoit I."/>
            <person name="Bouzid O."/>
            <person name="Brault B."/>
            <person name="Chen Z."/>
            <person name="Choquer M."/>
            <person name="Collemare J."/>
            <person name="Cotton P."/>
            <person name="Danchin E.G."/>
            <person name="Da Silva C."/>
            <person name="Gautier A."/>
            <person name="Giraud C."/>
            <person name="Giraud T."/>
            <person name="Gonzalez C."/>
            <person name="Grossetete S."/>
            <person name="Gueldener U."/>
            <person name="Henrissat B."/>
            <person name="Howlett B.J."/>
            <person name="Kodira C."/>
            <person name="Kretschmer M."/>
            <person name="Lappartient A."/>
            <person name="Leroch M."/>
            <person name="Levis C."/>
            <person name="Mauceli E."/>
            <person name="Neuveglise C."/>
            <person name="Oeser B."/>
            <person name="Pearson M."/>
            <person name="Poulain J."/>
            <person name="Poussereau N."/>
            <person name="Quesneville H."/>
            <person name="Rascle C."/>
            <person name="Schumacher J."/>
            <person name="Segurens B."/>
            <person name="Sexton A."/>
            <person name="Silva E."/>
            <person name="Sirven C."/>
            <person name="Soanes D.M."/>
            <person name="Talbot N.J."/>
            <person name="Templeton M."/>
            <person name="Yandava C."/>
            <person name="Yarden O."/>
            <person name="Zeng Q."/>
            <person name="Rollins J.A."/>
            <person name="Lebrun M.-H."/>
            <person name="Dickman M."/>
        </authorList>
    </citation>
    <scope>NUCLEOTIDE SEQUENCE [LARGE SCALE GENOMIC DNA]</scope>
    <source>
        <strain>B05.10</strain>
    </source>
</reference>
<reference key="2">
    <citation type="journal article" date="2012" name="Eukaryot. Cell">
        <title>Genome update of Botrytis cinerea strains B05.10 and T4.</title>
        <authorList>
            <person name="Staats M."/>
            <person name="van Kan J.A.L."/>
        </authorList>
    </citation>
    <scope>NUCLEOTIDE SEQUENCE [LARGE SCALE GENOMIC DNA]</scope>
    <scope>GENOME REANNOTATION</scope>
    <source>
        <strain>B05.10</strain>
    </source>
</reference>
<reference key="3">
    <citation type="journal article" date="2017" name="Mol. Plant Pathol.">
        <title>A gapless genome sequence of the fungus Botrytis cinerea.</title>
        <authorList>
            <person name="van Kan J.A.L."/>
            <person name="Stassen J.H.M."/>
            <person name="Mosbach A."/>
            <person name="van der Lee T.A.J."/>
            <person name="Faino L."/>
            <person name="Farmer A.D."/>
            <person name="Papasotiriou D.G."/>
            <person name="Zhou S."/>
            <person name="Seidl M.F."/>
            <person name="Cottam E."/>
            <person name="Edel D."/>
            <person name="Hahn M."/>
            <person name="Schwartz D.C."/>
            <person name="Dietrich R.A."/>
            <person name="Widdison S."/>
            <person name="Scalliet G."/>
        </authorList>
    </citation>
    <scope>NUCLEOTIDE SEQUENCE [LARGE SCALE GENOMIC DNA]</scope>
    <scope>GENOME REANNOTATION</scope>
    <source>
        <strain>B05.10</strain>
    </source>
</reference>